<sequence>MTDLTATPAPAEPAASAYDPTAKQKAQAKTARIPIKIVPIEKLKKPEWIRVKAATGSSRFNEIKTILREHNLHTVCEEASCPNIGECFGKGTATFMIMGDKCTRRCPFCDVGHGRPDPLDADEPKNLARTIAALKLKYVVITSVDRDDLRDGGAGHFVECIREVREQSPATRIEILTPDFRGRLDRALAILNAAPPDVMNHNLETVPRLYKEARPGSDYAHSLKLLKDFKALHPDVATKSGLMVGLGETTDEILQVMRDLRAHDVDMLTIGQYLQPSEHHLPVREYVHPDTFKMYEEEAYKMGFTHAAVGAMVRSSYHADLQAHGAGVV</sequence>
<dbReference type="EC" id="2.8.1.8" evidence="1"/>
<dbReference type="EMBL" id="CP000570">
    <property type="protein sequence ID" value="ABN81647.1"/>
    <property type="molecule type" value="Genomic_DNA"/>
</dbReference>
<dbReference type="RefSeq" id="WP_004522930.1">
    <property type="nucleotide sequence ID" value="NC_009074.1"/>
</dbReference>
<dbReference type="SMR" id="A3N576"/>
<dbReference type="GeneID" id="93058932"/>
<dbReference type="KEGG" id="bpd:BURPS668_0444"/>
<dbReference type="HOGENOM" id="CLU_033144_2_1_4"/>
<dbReference type="UniPathway" id="UPA00538">
    <property type="reaction ID" value="UER00593"/>
</dbReference>
<dbReference type="GO" id="GO:0005737">
    <property type="term" value="C:cytoplasm"/>
    <property type="evidence" value="ECO:0007669"/>
    <property type="project" value="UniProtKB-SubCell"/>
</dbReference>
<dbReference type="GO" id="GO:0051539">
    <property type="term" value="F:4 iron, 4 sulfur cluster binding"/>
    <property type="evidence" value="ECO:0007669"/>
    <property type="project" value="UniProtKB-UniRule"/>
</dbReference>
<dbReference type="GO" id="GO:0016992">
    <property type="term" value="F:lipoate synthase activity"/>
    <property type="evidence" value="ECO:0007669"/>
    <property type="project" value="UniProtKB-UniRule"/>
</dbReference>
<dbReference type="GO" id="GO:0046872">
    <property type="term" value="F:metal ion binding"/>
    <property type="evidence" value="ECO:0007669"/>
    <property type="project" value="UniProtKB-KW"/>
</dbReference>
<dbReference type="CDD" id="cd01335">
    <property type="entry name" value="Radical_SAM"/>
    <property type="match status" value="1"/>
</dbReference>
<dbReference type="FunFam" id="3.20.20.70:FF:000040">
    <property type="entry name" value="Lipoyl synthase"/>
    <property type="match status" value="1"/>
</dbReference>
<dbReference type="Gene3D" id="3.20.20.70">
    <property type="entry name" value="Aldolase class I"/>
    <property type="match status" value="1"/>
</dbReference>
<dbReference type="HAMAP" id="MF_00206">
    <property type="entry name" value="Lipoyl_synth"/>
    <property type="match status" value="1"/>
</dbReference>
<dbReference type="InterPro" id="IPR013785">
    <property type="entry name" value="Aldolase_TIM"/>
</dbReference>
<dbReference type="InterPro" id="IPR006638">
    <property type="entry name" value="Elp3/MiaA/NifB-like_rSAM"/>
</dbReference>
<dbReference type="InterPro" id="IPR031691">
    <property type="entry name" value="LIAS_N"/>
</dbReference>
<dbReference type="InterPro" id="IPR003698">
    <property type="entry name" value="Lipoyl_synth"/>
</dbReference>
<dbReference type="InterPro" id="IPR007197">
    <property type="entry name" value="rSAM"/>
</dbReference>
<dbReference type="NCBIfam" id="TIGR00510">
    <property type="entry name" value="lipA"/>
    <property type="match status" value="1"/>
</dbReference>
<dbReference type="NCBIfam" id="NF004019">
    <property type="entry name" value="PRK05481.1"/>
    <property type="match status" value="1"/>
</dbReference>
<dbReference type="NCBIfam" id="NF009544">
    <property type="entry name" value="PRK12928.1"/>
    <property type="match status" value="1"/>
</dbReference>
<dbReference type="PANTHER" id="PTHR10949">
    <property type="entry name" value="LIPOYL SYNTHASE"/>
    <property type="match status" value="1"/>
</dbReference>
<dbReference type="PANTHER" id="PTHR10949:SF0">
    <property type="entry name" value="LIPOYL SYNTHASE, MITOCHONDRIAL"/>
    <property type="match status" value="1"/>
</dbReference>
<dbReference type="Pfam" id="PF16881">
    <property type="entry name" value="LIAS_N"/>
    <property type="match status" value="1"/>
</dbReference>
<dbReference type="Pfam" id="PF04055">
    <property type="entry name" value="Radical_SAM"/>
    <property type="match status" value="1"/>
</dbReference>
<dbReference type="PIRSF" id="PIRSF005963">
    <property type="entry name" value="Lipoyl_synth"/>
    <property type="match status" value="1"/>
</dbReference>
<dbReference type="SFLD" id="SFLDF00271">
    <property type="entry name" value="lipoyl_synthase"/>
    <property type="match status" value="1"/>
</dbReference>
<dbReference type="SFLD" id="SFLDS00029">
    <property type="entry name" value="Radical_SAM"/>
    <property type="match status" value="1"/>
</dbReference>
<dbReference type="SMART" id="SM00729">
    <property type="entry name" value="Elp3"/>
    <property type="match status" value="1"/>
</dbReference>
<dbReference type="SUPFAM" id="SSF102114">
    <property type="entry name" value="Radical SAM enzymes"/>
    <property type="match status" value="1"/>
</dbReference>
<dbReference type="PROSITE" id="PS51918">
    <property type="entry name" value="RADICAL_SAM"/>
    <property type="match status" value="1"/>
</dbReference>
<organism>
    <name type="scientific">Burkholderia pseudomallei (strain 668)</name>
    <dbReference type="NCBI Taxonomy" id="320373"/>
    <lineage>
        <taxon>Bacteria</taxon>
        <taxon>Pseudomonadati</taxon>
        <taxon>Pseudomonadota</taxon>
        <taxon>Betaproteobacteria</taxon>
        <taxon>Burkholderiales</taxon>
        <taxon>Burkholderiaceae</taxon>
        <taxon>Burkholderia</taxon>
        <taxon>pseudomallei group</taxon>
    </lineage>
</organism>
<reference key="1">
    <citation type="journal article" date="2010" name="Genome Biol. Evol.">
        <title>Continuing evolution of Burkholderia mallei through genome reduction and large-scale rearrangements.</title>
        <authorList>
            <person name="Losada L."/>
            <person name="Ronning C.M."/>
            <person name="DeShazer D."/>
            <person name="Woods D."/>
            <person name="Fedorova N."/>
            <person name="Kim H.S."/>
            <person name="Shabalina S.A."/>
            <person name="Pearson T.R."/>
            <person name="Brinkac L."/>
            <person name="Tan P."/>
            <person name="Nandi T."/>
            <person name="Crabtree J."/>
            <person name="Badger J."/>
            <person name="Beckstrom-Sternberg S."/>
            <person name="Saqib M."/>
            <person name="Schutzer S.E."/>
            <person name="Keim P."/>
            <person name="Nierman W.C."/>
        </authorList>
    </citation>
    <scope>NUCLEOTIDE SEQUENCE [LARGE SCALE GENOMIC DNA]</scope>
    <source>
        <strain>668</strain>
    </source>
</reference>
<accession>A3N576</accession>
<comment type="function">
    <text evidence="1">Catalyzes the radical-mediated insertion of two sulfur atoms into the C-6 and C-8 positions of the octanoyl moiety bound to the lipoyl domains of lipoate-dependent enzymes, thereby converting the octanoylated domains into lipoylated derivatives.</text>
</comment>
<comment type="catalytic activity">
    <reaction evidence="1">
        <text>[[Fe-S] cluster scaffold protein carrying a second [4Fe-4S](2+) cluster] + N(6)-octanoyl-L-lysyl-[protein] + 2 oxidized [2Fe-2S]-[ferredoxin] + 2 S-adenosyl-L-methionine + 4 H(+) = [[Fe-S] cluster scaffold protein] + N(6)-[(R)-dihydrolipoyl]-L-lysyl-[protein] + 4 Fe(3+) + 2 hydrogen sulfide + 2 5'-deoxyadenosine + 2 L-methionine + 2 reduced [2Fe-2S]-[ferredoxin]</text>
        <dbReference type="Rhea" id="RHEA:16585"/>
        <dbReference type="Rhea" id="RHEA-COMP:9928"/>
        <dbReference type="Rhea" id="RHEA-COMP:10000"/>
        <dbReference type="Rhea" id="RHEA-COMP:10001"/>
        <dbReference type="Rhea" id="RHEA-COMP:10475"/>
        <dbReference type="Rhea" id="RHEA-COMP:14568"/>
        <dbReference type="Rhea" id="RHEA-COMP:14569"/>
        <dbReference type="ChEBI" id="CHEBI:15378"/>
        <dbReference type="ChEBI" id="CHEBI:17319"/>
        <dbReference type="ChEBI" id="CHEBI:29034"/>
        <dbReference type="ChEBI" id="CHEBI:29919"/>
        <dbReference type="ChEBI" id="CHEBI:33722"/>
        <dbReference type="ChEBI" id="CHEBI:33737"/>
        <dbReference type="ChEBI" id="CHEBI:33738"/>
        <dbReference type="ChEBI" id="CHEBI:57844"/>
        <dbReference type="ChEBI" id="CHEBI:59789"/>
        <dbReference type="ChEBI" id="CHEBI:78809"/>
        <dbReference type="ChEBI" id="CHEBI:83100"/>
        <dbReference type="EC" id="2.8.1.8"/>
    </reaction>
</comment>
<comment type="cofactor">
    <cofactor evidence="1">
        <name>[4Fe-4S] cluster</name>
        <dbReference type="ChEBI" id="CHEBI:49883"/>
    </cofactor>
    <text evidence="1">Binds 2 [4Fe-4S] clusters per subunit. One cluster is coordinated with 3 cysteines and an exchangeable S-adenosyl-L-methionine.</text>
</comment>
<comment type="pathway">
    <text evidence="1">Protein modification; protein lipoylation via endogenous pathway; protein N(6)-(lipoyl)lysine from octanoyl-[acyl-carrier-protein]: step 2/2.</text>
</comment>
<comment type="subcellular location">
    <subcellularLocation>
        <location evidence="1">Cytoplasm</location>
    </subcellularLocation>
</comment>
<comment type="similarity">
    <text evidence="1">Belongs to the radical SAM superfamily. Lipoyl synthase family.</text>
</comment>
<proteinExistence type="inferred from homology"/>
<evidence type="ECO:0000255" key="1">
    <source>
        <dbReference type="HAMAP-Rule" id="MF_00206"/>
    </source>
</evidence>
<evidence type="ECO:0000255" key="2">
    <source>
        <dbReference type="PROSITE-ProRule" id="PRU01266"/>
    </source>
</evidence>
<evidence type="ECO:0000256" key="3">
    <source>
        <dbReference type="SAM" id="MobiDB-lite"/>
    </source>
</evidence>
<protein>
    <recommendedName>
        <fullName evidence="1">Lipoyl synthase</fullName>
        <ecNumber evidence="1">2.8.1.8</ecNumber>
    </recommendedName>
    <alternativeName>
        <fullName evidence="1">Lip-syn</fullName>
        <shortName evidence="1">LS</shortName>
    </alternativeName>
    <alternativeName>
        <fullName evidence="1">Lipoate synthase</fullName>
    </alternativeName>
    <alternativeName>
        <fullName evidence="1">Lipoic acid synthase</fullName>
    </alternativeName>
    <alternativeName>
        <fullName evidence="1">Sulfur insertion protein LipA</fullName>
    </alternativeName>
</protein>
<feature type="chain" id="PRO_1000012203" description="Lipoyl synthase">
    <location>
        <begin position="1"/>
        <end position="329"/>
    </location>
</feature>
<feature type="domain" description="Radical SAM core" evidence="2">
    <location>
        <begin position="87"/>
        <end position="305"/>
    </location>
</feature>
<feature type="region of interest" description="Disordered" evidence="3">
    <location>
        <begin position="1"/>
        <end position="23"/>
    </location>
</feature>
<feature type="binding site" evidence="1">
    <location>
        <position position="76"/>
    </location>
    <ligand>
        <name>[4Fe-4S] cluster</name>
        <dbReference type="ChEBI" id="CHEBI:49883"/>
        <label>1</label>
    </ligand>
</feature>
<feature type="binding site" evidence="1">
    <location>
        <position position="81"/>
    </location>
    <ligand>
        <name>[4Fe-4S] cluster</name>
        <dbReference type="ChEBI" id="CHEBI:49883"/>
        <label>1</label>
    </ligand>
</feature>
<feature type="binding site" evidence="1">
    <location>
        <position position="87"/>
    </location>
    <ligand>
        <name>[4Fe-4S] cluster</name>
        <dbReference type="ChEBI" id="CHEBI:49883"/>
        <label>1</label>
    </ligand>
</feature>
<feature type="binding site" evidence="1">
    <location>
        <position position="102"/>
    </location>
    <ligand>
        <name>[4Fe-4S] cluster</name>
        <dbReference type="ChEBI" id="CHEBI:49883"/>
        <label>2</label>
        <note>4Fe-4S-S-AdoMet</note>
    </ligand>
</feature>
<feature type="binding site" evidence="1">
    <location>
        <position position="106"/>
    </location>
    <ligand>
        <name>[4Fe-4S] cluster</name>
        <dbReference type="ChEBI" id="CHEBI:49883"/>
        <label>2</label>
        <note>4Fe-4S-S-AdoMet</note>
    </ligand>
</feature>
<feature type="binding site" evidence="1">
    <location>
        <position position="109"/>
    </location>
    <ligand>
        <name>[4Fe-4S] cluster</name>
        <dbReference type="ChEBI" id="CHEBI:49883"/>
        <label>2</label>
        <note>4Fe-4S-S-AdoMet</note>
    </ligand>
</feature>
<feature type="binding site" evidence="1">
    <location>
        <position position="316"/>
    </location>
    <ligand>
        <name>[4Fe-4S] cluster</name>
        <dbReference type="ChEBI" id="CHEBI:49883"/>
        <label>1</label>
    </ligand>
</feature>
<gene>
    <name evidence="1" type="primary">lipA</name>
    <name type="ordered locus">BURPS668_0444</name>
</gene>
<keyword id="KW-0004">4Fe-4S</keyword>
<keyword id="KW-0963">Cytoplasm</keyword>
<keyword id="KW-0408">Iron</keyword>
<keyword id="KW-0411">Iron-sulfur</keyword>
<keyword id="KW-0479">Metal-binding</keyword>
<keyword id="KW-0949">S-adenosyl-L-methionine</keyword>
<keyword id="KW-0808">Transferase</keyword>
<name>LIPA_BURP6</name>